<accession>Q9FFW6</accession>
<evidence type="ECO:0000255" key="1">
    <source>
        <dbReference type="PROSITE-ProRule" id="PRU01088"/>
    </source>
</evidence>
<evidence type="ECO:0000256" key="2">
    <source>
        <dbReference type="SAM" id="MobiDB-lite"/>
    </source>
</evidence>
<evidence type="ECO:0000305" key="3"/>
<feature type="chain" id="PRO_0000430401" description="Jacalin-related lectin 44">
    <location>
        <begin position="1"/>
        <end position="594"/>
    </location>
</feature>
<feature type="domain" description="Jacalin-type lectin 1" evidence="1">
    <location>
        <begin position="2"/>
        <end position="148"/>
    </location>
</feature>
<feature type="domain" description="Jacalin-type lectin 2" evidence="1">
    <location>
        <begin position="151"/>
        <end position="293"/>
    </location>
</feature>
<feature type="domain" description="Jacalin-type lectin 3" evidence="1">
    <location>
        <begin position="296"/>
        <end position="441"/>
    </location>
</feature>
<feature type="domain" description="Jacalin-type lectin 4" evidence="1">
    <location>
        <begin position="448"/>
        <end position="588"/>
    </location>
</feature>
<feature type="region of interest" description="Disordered" evidence="2">
    <location>
        <begin position="1"/>
        <end position="23"/>
    </location>
</feature>
<feature type="compositionally biased region" description="Basic and acidic residues" evidence="2">
    <location>
        <begin position="10"/>
        <end position="23"/>
    </location>
</feature>
<comment type="similarity">
    <text evidence="1 3">Belongs to the jacalin lectin family.</text>
</comment>
<dbReference type="EMBL" id="AB005231">
    <property type="protein sequence ID" value="BAB10145.1"/>
    <property type="molecule type" value="Genomic_DNA"/>
</dbReference>
<dbReference type="EMBL" id="CP002688">
    <property type="protein sequence ID" value="AED94333.1"/>
    <property type="molecule type" value="Genomic_DNA"/>
</dbReference>
<dbReference type="EMBL" id="BT004048">
    <property type="protein sequence ID" value="AAO42080.1"/>
    <property type="molecule type" value="mRNA"/>
</dbReference>
<dbReference type="EMBL" id="BT004998">
    <property type="protein sequence ID" value="AAO50531.1"/>
    <property type="molecule type" value="mRNA"/>
</dbReference>
<dbReference type="RefSeq" id="NP_198671.1">
    <property type="nucleotide sequence ID" value="NM_123216.6"/>
</dbReference>
<dbReference type="SMR" id="Q9FFW6"/>
<dbReference type="BioGRID" id="19094">
    <property type="interactions" value="1"/>
</dbReference>
<dbReference type="FunCoup" id="Q9FFW6">
    <property type="interactions" value="1"/>
</dbReference>
<dbReference type="IntAct" id="Q9FFW6">
    <property type="interactions" value="1"/>
</dbReference>
<dbReference type="STRING" id="3702.Q9FFW6"/>
<dbReference type="GlyGen" id="Q9FFW6">
    <property type="glycosylation" value="1 site"/>
</dbReference>
<dbReference type="PaxDb" id="3702-AT5G38550.1"/>
<dbReference type="ProteomicsDB" id="238977"/>
<dbReference type="EnsemblPlants" id="AT5G38550.1">
    <property type="protein sequence ID" value="AT5G38550.1"/>
    <property type="gene ID" value="AT5G38550"/>
</dbReference>
<dbReference type="GeneID" id="833843"/>
<dbReference type="Gramene" id="AT5G38550.1">
    <property type="protein sequence ID" value="AT5G38550.1"/>
    <property type="gene ID" value="AT5G38550"/>
</dbReference>
<dbReference type="KEGG" id="ath:AT5G38550"/>
<dbReference type="Araport" id="AT5G38550"/>
<dbReference type="TAIR" id="AT5G38550"/>
<dbReference type="HOGENOM" id="CLU_041730_0_0_1"/>
<dbReference type="InParanoid" id="Q9FFW6"/>
<dbReference type="PhylomeDB" id="Q9FFW6"/>
<dbReference type="PRO" id="PR:Q9FFW6"/>
<dbReference type="Proteomes" id="UP000006548">
    <property type="component" value="Chromosome 5"/>
</dbReference>
<dbReference type="ExpressionAtlas" id="Q9FFW6">
    <property type="expression patterns" value="baseline and differential"/>
</dbReference>
<dbReference type="GO" id="GO:0030246">
    <property type="term" value="F:carbohydrate binding"/>
    <property type="evidence" value="ECO:0007669"/>
    <property type="project" value="UniProtKB-KW"/>
</dbReference>
<dbReference type="CDD" id="cd09612">
    <property type="entry name" value="Jacalin"/>
    <property type="match status" value="4"/>
</dbReference>
<dbReference type="FunFam" id="2.100.10.30:FF:000001">
    <property type="entry name" value="Jacalin-related lectin 33"/>
    <property type="match status" value="4"/>
</dbReference>
<dbReference type="Gene3D" id="2.100.10.30">
    <property type="entry name" value="Jacalin-like lectin domain"/>
    <property type="match status" value="4"/>
</dbReference>
<dbReference type="InterPro" id="IPR001229">
    <property type="entry name" value="Jacalin-like_lectin_dom"/>
</dbReference>
<dbReference type="InterPro" id="IPR033734">
    <property type="entry name" value="Jacalin-like_lectin_dom_plant"/>
</dbReference>
<dbReference type="InterPro" id="IPR036404">
    <property type="entry name" value="Jacalin-like_lectin_dom_sf"/>
</dbReference>
<dbReference type="PANTHER" id="PTHR47293:SF58">
    <property type="entry name" value="JACALIN-RELATED LECTIN 22-RELATED"/>
    <property type="match status" value="1"/>
</dbReference>
<dbReference type="PANTHER" id="PTHR47293">
    <property type="entry name" value="JACALIN-RELATED LECTIN 3"/>
    <property type="match status" value="1"/>
</dbReference>
<dbReference type="Pfam" id="PF01419">
    <property type="entry name" value="Jacalin"/>
    <property type="match status" value="4"/>
</dbReference>
<dbReference type="SMART" id="SM00915">
    <property type="entry name" value="Jacalin"/>
    <property type="match status" value="4"/>
</dbReference>
<dbReference type="SUPFAM" id="SSF51101">
    <property type="entry name" value="Mannose-binding lectins"/>
    <property type="match status" value="4"/>
</dbReference>
<dbReference type="PROSITE" id="PS51752">
    <property type="entry name" value="JACALIN_LECTIN"/>
    <property type="match status" value="4"/>
</dbReference>
<gene>
    <name type="primary">JAL44</name>
    <name type="ordered locus">At5g38550</name>
    <name type="ORF">MBB18.8</name>
</gene>
<protein>
    <recommendedName>
        <fullName>Jacalin-related lectin 44</fullName>
    </recommendedName>
</protein>
<keyword id="KW-0430">Lectin</keyword>
<keyword id="KW-1185">Reference proteome</keyword>
<keyword id="KW-0677">Repeat</keyword>
<sequence>MIQKLGAKGIKSDERNQREWDDGSEHDDVTKIYVRGGREGIRSIYFNYVKNGKPKDGSIHGYFDSGFTQTFEINHLRGEYLESVDAYYDKKSYGMQAIQFKTNFRTSELMGYSYECTMFTLAVQGKKIIGFHGSNYVHILSLGAYFISIAPTRLEVKGSKGSKKWDDGFDHENVSKIEVLGGFEGILYIKVDYIKNGKLETGLVHGHSGGDGFLQKMEINQSKNEYLVYVEGYYDDASETIQGLHFQTNLNNPVMMGYKKGRKFLLASNGNKIIGFHGYADKSLNSLGAYFSTTTPNKLECQGDRKGLPWDDGCNYDGVKKVYVDSISDIDSVRFEYDNGGKVEKTPYRRDVTNEKEFVLDYPNEFITSVEGTLATPTNFDITWILSLTFKTSKGRTSPTFGSSSPGRKFVLEKNGSALVGFHGYIGPGYNIKALGAYYRPIPPTPDVKRLEAQGGDGGASWDDGGTFNSVRKIYIGLGKNVVGFVKFLYYKNARVVIGDDHGNKTLSSDLLEFLLDPFEHIISVEGTYDDTSGGITMLRFETNLQKSPYFGFGTTSNFLLHKDNHQIVGFHGKSSNMLHQLGVHVIPNGFKFI</sequence>
<name>JAL44_ARATH</name>
<proteinExistence type="evidence at transcript level"/>
<reference key="1">
    <citation type="journal article" date="1997" name="DNA Res.">
        <title>Structural analysis of Arabidopsis thaliana chromosome 5. I. Sequence features of the 1.6 Mb regions covered by twenty physically assigned P1 clones.</title>
        <authorList>
            <person name="Sato S."/>
            <person name="Kotani H."/>
            <person name="Nakamura Y."/>
            <person name="Kaneko T."/>
            <person name="Asamizu E."/>
            <person name="Fukami M."/>
            <person name="Miyajima N."/>
            <person name="Tabata S."/>
        </authorList>
    </citation>
    <scope>NUCLEOTIDE SEQUENCE [LARGE SCALE GENOMIC DNA]</scope>
    <source>
        <strain>cv. Columbia</strain>
    </source>
</reference>
<reference key="2">
    <citation type="journal article" date="2017" name="Plant J.">
        <title>Araport11: a complete reannotation of the Arabidopsis thaliana reference genome.</title>
        <authorList>
            <person name="Cheng C.Y."/>
            <person name="Krishnakumar V."/>
            <person name="Chan A.P."/>
            <person name="Thibaud-Nissen F."/>
            <person name="Schobel S."/>
            <person name="Town C.D."/>
        </authorList>
    </citation>
    <scope>GENOME REANNOTATION</scope>
    <source>
        <strain>cv. Columbia</strain>
    </source>
</reference>
<reference key="3">
    <citation type="journal article" date="2003" name="Science">
        <title>Empirical analysis of transcriptional activity in the Arabidopsis genome.</title>
        <authorList>
            <person name="Yamada K."/>
            <person name="Lim J."/>
            <person name="Dale J.M."/>
            <person name="Chen H."/>
            <person name="Shinn P."/>
            <person name="Palm C.J."/>
            <person name="Southwick A.M."/>
            <person name="Wu H.C."/>
            <person name="Kim C.J."/>
            <person name="Nguyen M."/>
            <person name="Pham P.K."/>
            <person name="Cheuk R.F."/>
            <person name="Karlin-Newmann G."/>
            <person name="Liu S.X."/>
            <person name="Lam B."/>
            <person name="Sakano H."/>
            <person name="Wu T."/>
            <person name="Yu G."/>
            <person name="Miranda M."/>
            <person name="Quach H.L."/>
            <person name="Tripp M."/>
            <person name="Chang C.H."/>
            <person name="Lee J.M."/>
            <person name="Toriumi M.J."/>
            <person name="Chan M.M."/>
            <person name="Tang C.C."/>
            <person name="Onodera C.S."/>
            <person name="Deng J.M."/>
            <person name="Akiyama K."/>
            <person name="Ansari Y."/>
            <person name="Arakawa T."/>
            <person name="Banh J."/>
            <person name="Banno F."/>
            <person name="Bowser L."/>
            <person name="Brooks S.Y."/>
            <person name="Carninci P."/>
            <person name="Chao Q."/>
            <person name="Choy N."/>
            <person name="Enju A."/>
            <person name="Goldsmith A.D."/>
            <person name="Gurjal M."/>
            <person name="Hansen N.F."/>
            <person name="Hayashizaki Y."/>
            <person name="Johnson-Hopson C."/>
            <person name="Hsuan V.W."/>
            <person name="Iida K."/>
            <person name="Karnes M."/>
            <person name="Khan S."/>
            <person name="Koesema E."/>
            <person name="Ishida J."/>
            <person name="Jiang P.X."/>
            <person name="Jones T."/>
            <person name="Kawai J."/>
            <person name="Kamiya A."/>
            <person name="Meyers C."/>
            <person name="Nakajima M."/>
            <person name="Narusaka M."/>
            <person name="Seki M."/>
            <person name="Sakurai T."/>
            <person name="Satou M."/>
            <person name="Tamse R."/>
            <person name="Vaysberg M."/>
            <person name="Wallender E.K."/>
            <person name="Wong C."/>
            <person name="Yamamura Y."/>
            <person name="Yuan S."/>
            <person name="Shinozaki K."/>
            <person name="Davis R.W."/>
            <person name="Theologis A."/>
            <person name="Ecker J.R."/>
        </authorList>
    </citation>
    <scope>NUCLEOTIDE SEQUENCE [LARGE SCALE MRNA]</scope>
    <source>
        <strain>cv. Columbia</strain>
    </source>
</reference>
<reference key="4">
    <citation type="journal article" date="2008" name="Plant Cell Physiol.">
        <title>Antagonistic jacalin-related lectins regulate the size of ER body-type beta-glucosidase complexes in Arabidopsis thaliana.</title>
        <authorList>
            <person name="Nagano A.J."/>
            <person name="Fukao Y."/>
            <person name="Fujiwara M."/>
            <person name="Nishimura M."/>
            <person name="Hara-Nishimura I."/>
        </authorList>
    </citation>
    <scope>GENE FAMILY</scope>
    <scope>NOMENCLATURE</scope>
</reference>
<organism>
    <name type="scientific">Arabidopsis thaliana</name>
    <name type="common">Mouse-ear cress</name>
    <dbReference type="NCBI Taxonomy" id="3702"/>
    <lineage>
        <taxon>Eukaryota</taxon>
        <taxon>Viridiplantae</taxon>
        <taxon>Streptophyta</taxon>
        <taxon>Embryophyta</taxon>
        <taxon>Tracheophyta</taxon>
        <taxon>Spermatophyta</taxon>
        <taxon>Magnoliopsida</taxon>
        <taxon>eudicotyledons</taxon>
        <taxon>Gunneridae</taxon>
        <taxon>Pentapetalae</taxon>
        <taxon>rosids</taxon>
        <taxon>malvids</taxon>
        <taxon>Brassicales</taxon>
        <taxon>Brassicaceae</taxon>
        <taxon>Camelineae</taxon>
        <taxon>Arabidopsis</taxon>
    </lineage>
</organism>